<reference key="1">
    <citation type="submission" date="2009-01" db="EMBL/GenBank/DDBJ databases">
        <title>Complete sequence of Desulfovibrio desulfuricans subsp. desulfuricans str. ATCC 27774.</title>
        <authorList>
            <consortium name="US DOE Joint Genome Institute"/>
            <person name="Lucas S."/>
            <person name="Copeland A."/>
            <person name="Lapidus A."/>
            <person name="Glavina del Rio T."/>
            <person name="Tice H."/>
            <person name="Bruce D."/>
            <person name="Goodwin L."/>
            <person name="Pitluck S."/>
            <person name="Sims D."/>
            <person name="Lu M."/>
            <person name="Kiss H."/>
            <person name="Meineke L."/>
            <person name="Brettin T."/>
            <person name="Detter J.C."/>
            <person name="Han C."/>
            <person name="Larimer F."/>
            <person name="Land M."/>
            <person name="Hauser L."/>
            <person name="Kyrpides N."/>
            <person name="Ovchinnikova G."/>
            <person name="Hazen T.C."/>
        </authorList>
    </citation>
    <scope>NUCLEOTIDE SEQUENCE [LARGE SCALE GENOMIC DNA]</scope>
    <source>
        <strain>ATCC 27774 / DSM 6949 / MB</strain>
    </source>
</reference>
<organism>
    <name type="scientific">Desulfovibrio desulfuricans (strain ATCC 27774 / DSM 6949 / MB)</name>
    <dbReference type="NCBI Taxonomy" id="525146"/>
    <lineage>
        <taxon>Bacteria</taxon>
        <taxon>Pseudomonadati</taxon>
        <taxon>Thermodesulfobacteriota</taxon>
        <taxon>Desulfovibrionia</taxon>
        <taxon>Desulfovibrionales</taxon>
        <taxon>Desulfovibrionaceae</taxon>
        <taxon>Desulfovibrio</taxon>
    </lineage>
</organism>
<name>GLSA_DESDA</name>
<dbReference type="EC" id="3.5.1.2" evidence="1"/>
<dbReference type="EMBL" id="CP001358">
    <property type="protein sequence ID" value="ACL47968.1"/>
    <property type="molecule type" value="Genomic_DNA"/>
</dbReference>
<dbReference type="SMR" id="B8J1X3"/>
<dbReference type="STRING" id="525146.Ddes_0048"/>
<dbReference type="KEGG" id="dds:Ddes_0048"/>
<dbReference type="eggNOG" id="COG2066">
    <property type="taxonomic scope" value="Bacteria"/>
</dbReference>
<dbReference type="HOGENOM" id="CLU_027932_1_0_7"/>
<dbReference type="GO" id="GO:0004359">
    <property type="term" value="F:glutaminase activity"/>
    <property type="evidence" value="ECO:0007669"/>
    <property type="project" value="UniProtKB-UniRule"/>
</dbReference>
<dbReference type="GO" id="GO:0006537">
    <property type="term" value="P:glutamate biosynthetic process"/>
    <property type="evidence" value="ECO:0007669"/>
    <property type="project" value="TreeGrafter"/>
</dbReference>
<dbReference type="GO" id="GO:0006543">
    <property type="term" value="P:glutamine catabolic process"/>
    <property type="evidence" value="ECO:0007669"/>
    <property type="project" value="TreeGrafter"/>
</dbReference>
<dbReference type="Gene3D" id="3.40.710.10">
    <property type="entry name" value="DD-peptidase/beta-lactamase superfamily"/>
    <property type="match status" value="1"/>
</dbReference>
<dbReference type="HAMAP" id="MF_00313">
    <property type="entry name" value="Glutaminase"/>
    <property type="match status" value="1"/>
</dbReference>
<dbReference type="InterPro" id="IPR012338">
    <property type="entry name" value="Beta-lactam/transpept-like"/>
</dbReference>
<dbReference type="InterPro" id="IPR015868">
    <property type="entry name" value="Glutaminase"/>
</dbReference>
<dbReference type="NCBIfam" id="TIGR03814">
    <property type="entry name" value="Gln_ase"/>
    <property type="match status" value="1"/>
</dbReference>
<dbReference type="NCBIfam" id="NF009020">
    <property type="entry name" value="PRK12356.1"/>
    <property type="match status" value="1"/>
</dbReference>
<dbReference type="PANTHER" id="PTHR12544">
    <property type="entry name" value="GLUTAMINASE"/>
    <property type="match status" value="1"/>
</dbReference>
<dbReference type="PANTHER" id="PTHR12544:SF48">
    <property type="entry name" value="GLUTAMINASE 1"/>
    <property type="match status" value="1"/>
</dbReference>
<dbReference type="Pfam" id="PF04960">
    <property type="entry name" value="Glutaminase"/>
    <property type="match status" value="1"/>
</dbReference>
<dbReference type="SUPFAM" id="SSF56601">
    <property type="entry name" value="beta-lactamase/transpeptidase-like"/>
    <property type="match status" value="1"/>
</dbReference>
<gene>
    <name evidence="1" type="primary">glsA</name>
    <name type="ordered locus">Ddes_0048</name>
</gene>
<comment type="catalytic activity">
    <reaction evidence="1">
        <text>L-glutamine + H2O = L-glutamate + NH4(+)</text>
        <dbReference type="Rhea" id="RHEA:15889"/>
        <dbReference type="ChEBI" id="CHEBI:15377"/>
        <dbReference type="ChEBI" id="CHEBI:28938"/>
        <dbReference type="ChEBI" id="CHEBI:29985"/>
        <dbReference type="ChEBI" id="CHEBI:58359"/>
        <dbReference type="EC" id="3.5.1.2"/>
    </reaction>
</comment>
<comment type="subunit">
    <text evidence="1">Homotetramer.</text>
</comment>
<comment type="similarity">
    <text evidence="1">Belongs to the glutaminase family.</text>
</comment>
<keyword id="KW-0378">Hydrolase</keyword>
<evidence type="ECO:0000255" key="1">
    <source>
        <dbReference type="HAMAP-Rule" id="MF_00313"/>
    </source>
</evidence>
<accession>B8J1X3</accession>
<proteinExistence type="inferred from homology"/>
<feature type="chain" id="PRO_1000132905" description="Glutaminase">
    <location>
        <begin position="1"/>
        <end position="310"/>
    </location>
</feature>
<feature type="binding site" evidence="1">
    <location>
        <position position="66"/>
    </location>
    <ligand>
        <name>substrate</name>
    </ligand>
</feature>
<feature type="binding site" evidence="1">
    <location>
        <position position="117"/>
    </location>
    <ligand>
        <name>substrate</name>
    </ligand>
</feature>
<feature type="binding site" evidence="1">
    <location>
        <position position="161"/>
    </location>
    <ligand>
        <name>substrate</name>
    </ligand>
</feature>
<feature type="binding site" evidence="1">
    <location>
        <position position="168"/>
    </location>
    <ligand>
        <name>substrate</name>
    </ligand>
</feature>
<feature type="binding site" evidence="1">
    <location>
        <position position="192"/>
    </location>
    <ligand>
        <name>substrate</name>
    </ligand>
</feature>
<feature type="binding site" evidence="1">
    <location>
        <position position="244"/>
    </location>
    <ligand>
        <name>substrate</name>
    </ligand>
</feature>
<feature type="binding site" evidence="1">
    <location>
        <position position="262"/>
    </location>
    <ligand>
        <name>substrate</name>
    </ligand>
</feature>
<protein>
    <recommendedName>
        <fullName evidence="1">Glutaminase</fullName>
        <ecNumber evidence="1">3.5.1.2</ecNumber>
    </recommendedName>
</protein>
<sequence length="310" mass="32783">MPAIEKIQSVVNSAYAQFSKASGGANADYIPFLANIPSDLAAVAVVTAQGQVAAAGDAQYRFAIESISKVCTLALALEDFGPQAVQEKIGTSPTGLPFNSVMALELHGDKPLSPLVNAGAMASASLVKAGSTEERWQRILDMQRRLGSKEIAISDELNQSEQTTNFHNRGIAWLLYSAGYMYCDPMEACDVYTRQCSTLLNTVELATVGATIAARGRNPVTGEQVLKPEHCPCIMAEMTMEGMYDSSGDWAYKVGLPGKSGVGGGILTIVPGIMAIAAFSPPLDSVGNSVRGQKMAAFVANELGYNLYKA</sequence>